<accession>O59219</accession>
<sequence length="260" mass="29109">MAFVPPQAGYDRAITVFSPDGRLFQVNYAREAVKRGATAVGVKCNEGVVLAVEKRITSRLIEPESYEKIFQIDDHIAAASSGIIADARVLVNRARLEAQIHRLTYGEPAPLAVIVKKICDLKQMHTQYGGVRPFGAALLMAGVNEKPELYETDPSGAYFAWKAVAIGSGRNTAMAIFEEKYKDDMSLEEAIKLAIFALAKTMEKPSAENIEVAIITVKDKKFRKLSREEIEKYLNEVMKEVEEEEVKEKEEDYSELDSHY</sequence>
<name>PSA_PYRHO</name>
<organism>
    <name type="scientific">Pyrococcus horikoshii (strain ATCC 700860 / DSM 12428 / JCM 9974 / NBRC 100139 / OT-3)</name>
    <dbReference type="NCBI Taxonomy" id="70601"/>
    <lineage>
        <taxon>Archaea</taxon>
        <taxon>Methanobacteriati</taxon>
        <taxon>Methanobacteriota</taxon>
        <taxon>Thermococci</taxon>
        <taxon>Thermococcales</taxon>
        <taxon>Thermococcaceae</taxon>
        <taxon>Pyrococcus</taxon>
    </lineage>
</organism>
<proteinExistence type="inferred from homology"/>
<keyword id="KW-0963">Cytoplasm</keyword>
<keyword id="KW-0647">Proteasome</keyword>
<protein>
    <recommendedName>
        <fullName evidence="1">Proteasome subunit alpha</fullName>
    </recommendedName>
    <alternativeName>
        <fullName evidence="1">20S proteasome alpha subunit</fullName>
    </alternativeName>
    <alternativeName>
        <fullName evidence="1">Proteasome core protein PsmA</fullName>
    </alternativeName>
</protein>
<feature type="chain" id="PRO_0000124184" description="Proteasome subunit alpha">
    <location>
        <begin position="1"/>
        <end position="260"/>
    </location>
</feature>
<feature type="region of interest" description="Disordered" evidence="2">
    <location>
        <begin position="241"/>
        <end position="260"/>
    </location>
</feature>
<comment type="function">
    <text evidence="1">Component of the proteasome core, a large protease complex with broad specificity involved in protein degradation.</text>
</comment>
<comment type="activity regulation">
    <text evidence="1">The formation of the proteasomal ATPase PAN-20S proteasome complex, via the docking of the C-termini of PAN into the intersubunit pockets in the alpha-rings, triggers opening of the gate for substrate entry. Interconversion between the open-gate and close-gate conformations leads to a dynamic regulation of the 20S proteasome proteolysis activity.</text>
</comment>
<comment type="subunit">
    <text evidence="1">The 20S proteasome core is composed of 14 alpha and 14 beta subunits that assemble into four stacked heptameric rings, resulting in a barrel-shaped structure. The two inner rings, each composed of seven catalytic beta subunits, are sandwiched by two outer rings, each composed of seven alpha subunits. The catalytic chamber with the active sites is on the inside of the barrel. Has a gated structure, the ends of the cylinder being occluded by the N-termini of the alpha-subunits. Is capped at one or both ends by the proteasome regulatory ATPase, PAN.</text>
</comment>
<comment type="subcellular location">
    <subcellularLocation>
        <location evidence="1">Cytoplasm</location>
    </subcellularLocation>
</comment>
<comment type="similarity">
    <text evidence="1">Belongs to the peptidase T1A family.</text>
</comment>
<gene>
    <name evidence="1" type="primary">psmA</name>
    <name type="ordered locus">PH1553</name>
</gene>
<evidence type="ECO:0000255" key="1">
    <source>
        <dbReference type="HAMAP-Rule" id="MF_00289"/>
    </source>
</evidence>
<evidence type="ECO:0000256" key="2">
    <source>
        <dbReference type="SAM" id="MobiDB-lite"/>
    </source>
</evidence>
<dbReference type="EMBL" id="BA000001">
    <property type="protein sequence ID" value="BAA30665.1"/>
    <property type="molecule type" value="Genomic_DNA"/>
</dbReference>
<dbReference type="PIR" id="A71033">
    <property type="entry name" value="A71033"/>
</dbReference>
<dbReference type="RefSeq" id="WP_010885632.1">
    <property type="nucleotide sequence ID" value="NC_000961.1"/>
</dbReference>
<dbReference type="SMR" id="O59219"/>
<dbReference type="IntAct" id="O59219">
    <property type="interactions" value="1"/>
</dbReference>
<dbReference type="MINT" id="O59219"/>
<dbReference type="STRING" id="70601.gene:9378543"/>
<dbReference type="MEROPS" id="T01.970"/>
<dbReference type="EnsemblBacteria" id="BAA30665">
    <property type="protein sequence ID" value="BAA30665"/>
    <property type="gene ID" value="BAA30665"/>
</dbReference>
<dbReference type="GeneID" id="1443872"/>
<dbReference type="KEGG" id="pho:PH1553"/>
<dbReference type="eggNOG" id="arCOG00971">
    <property type="taxonomic scope" value="Archaea"/>
</dbReference>
<dbReference type="OrthoDB" id="9421at2157"/>
<dbReference type="Proteomes" id="UP000000752">
    <property type="component" value="Chromosome"/>
</dbReference>
<dbReference type="GO" id="GO:0005737">
    <property type="term" value="C:cytoplasm"/>
    <property type="evidence" value="ECO:0007669"/>
    <property type="project" value="UniProtKB-SubCell"/>
</dbReference>
<dbReference type="GO" id="GO:0019773">
    <property type="term" value="C:proteasome core complex, alpha-subunit complex"/>
    <property type="evidence" value="ECO:0000250"/>
    <property type="project" value="UniProtKB"/>
</dbReference>
<dbReference type="GO" id="GO:0004298">
    <property type="term" value="F:threonine-type endopeptidase activity"/>
    <property type="evidence" value="ECO:0007669"/>
    <property type="project" value="InterPro"/>
</dbReference>
<dbReference type="GO" id="GO:0010498">
    <property type="term" value="P:proteasomal protein catabolic process"/>
    <property type="evidence" value="ECO:0007669"/>
    <property type="project" value="UniProtKB-UniRule"/>
</dbReference>
<dbReference type="GO" id="GO:0006511">
    <property type="term" value="P:ubiquitin-dependent protein catabolic process"/>
    <property type="evidence" value="ECO:0007669"/>
    <property type="project" value="InterPro"/>
</dbReference>
<dbReference type="CDD" id="cd03756">
    <property type="entry name" value="proteasome_alpha_archeal"/>
    <property type="match status" value="1"/>
</dbReference>
<dbReference type="FunFam" id="3.60.20.10:FF:000004">
    <property type="entry name" value="Proteasome subunit alpha type-4"/>
    <property type="match status" value="1"/>
</dbReference>
<dbReference type="Gene3D" id="3.60.20.10">
    <property type="entry name" value="Glutamine Phosphoribosylpyrophosphate, subunit 1, domain 1"/>
    <property type="match status" value="1"/>
</dbReference>
<dbReference type="HAMAP" id="MF_00289_A">
    <property type="entry name" value="Proteasome_A_A"/>
    <property type="match status" value="1"/>
</dbReference>
<dbReference type="InterPro" id="IPR029055">
    <property type="entry name" value="Ntn_hydrolases_N"/>
</dbReference>
<dbReference type="InterPro" id="IPR050115">
    <property type="entry name" value="Proteasome_alpha"/>
</dbReference>
<dbReference type="InterPro" id="IPR023332">
    <property type="entry name" value="Proteasome_alpha-type"/>
</dbReference>
<dbReference type="InterPro" id="IPR019982">
    <property type="entry name" value="Proteasome_asu_arc"/>
</dbReference>
<dbReference type="InterPro" id="IPR000426">
    <property type="entry name" value="Proteasome_asu_N"/>
</dbReference>
<dbReference type="InterPro" id="IPR001353">
    <property type="entry name" value="Proteasome_sua/b"/>
</dbReference>
<dbReference type="NCBIfam" id="TIGR03633">
    <property type="entry name" value="arc_protsome_A"/>
    <property type="match status" value="1"/>
</dbReference>
<dbReference type="NCBIfam" id="NF003075">
    <property type="entry name" value="PRK03996.1"/>
    <property type="match status" value="1"/>
</dbReference>
<dbReference type="PANTHER" id="PTHR11599">
    <property type="entry name" value="PROTEASOME SUBUNIT ALPHA/BETA"/>
    <property type="match status" value="1"/>
</dbReference>
<dbReference type="Pfam" id="PF00227">
    <property type="entry name" value="Proteasome"/>
    <property type="match status" value="1"/>
</dbReference>
<dbReference type="Pfam" id="PF10584">
    <property type="entry name" value="Proteasome_A_N"/>
    <property type="match status" value="1"/>
</dbReference>
<dbReference type="SMART" id="SM00948">
    <property type="entry name" value="Proteasome_A_N"/>
    <property type="match status" value="1"/>
</dbReference>
<dbReference type="SUPFAM" id="SSF56235">
    <property type="entry name" value="N-terminal nucleophile aminohydrolases (Ntn hydrolases)"/>
    <property type="match status" value="1"/>
</dbReference>
<dbReference type="PROSITE" id="PS00388">
    <property type="entry name" value="PROTEASOME_ALPHA_1"/>
    <property type="match status" value="1"/>
</dbReference>
<dbReference type="PROSITE" id="PS51475">
    <property type="entry name" value="PROTEASOME_ALPHA_2"/>
    <property type="match status" value="1"/>
</dbReference>
<reference key="1">
    <citation type="journal article" date="1998" name="DNA Res.">
        <title>Complete sequence and gene organization of the genome of a hyper-thermophilic archaebacterium, Pyrococcus horikoshii OT3.</title>
        <authorList>
            <person name="Kawarabayasi Y."/>
            <person name="Sawada M."/>
            <person name="Horikawa H."/>
            <person name="Haikawa Y."/>
            <person name="Hino Y."/>
            <person name="Yamamoto S."/>
            <person name="Sekine M."/>
            <person name="Baba S."/>
            <person name="Kosugi H."/>
            <person name="Hosoyama A."/>
            <person name="Nagai Y."/>
            <person name="Sakai M."/>
            <person name="Ogura K."/>
            <person name="Otsuka R."/>
            <person name="Nakazawa H."/>
            <person name="Takamiya M."/>
            <person name="Ohfuku Y."/>
            <person name="Funahashi T."/>
            <person name="Tanaka T."/>
            <person name="Kudoh Y."/>
            <person name="Yamazaki J."/>
            <person name="Kushida N."/>
            <person name="Oguchi A."/>
            <person name="Aoki K."/>
            <person name="Yoshizawa T."/>
            <person name="Nakamura Y."/>
            <person name="Robb F.T."/>
            <person name="Horikoshi K."/>
            <person name="Masuchi Y."/>
            <person name="Shizuya H."/>
            <person name="Kikuchi H."/>
        </authorList>
    </citation>
    <scope>NUCLEOTIDE SEQUENCE [LARGE SCALE GENOMIC DNA]</scope>
    <source>
        <strain>ATCC 700860 / DSM 12428 / JCM 9974 / NBRC 100139 / OT-3</strain>
    </source>
</reference>